<dbReference type="EMBL" id="CP000826">
    <property type="protein sequence ID" value="ABV41247.1"/>
    <property type="molecule type" value="Genomic_DNA"/>
</dbReference>
<dbReference type="SMR" id="A8GDQ7"/>
<dbReference type="STRING" id="399741.Spro_2146"/>
<dbReference type="KEGG" id="spe:Spro_2146"/>
<dbReference type="eggNOG" id="COG0291">
    <property type="taxonomic scope" value="Bacteria"/>
</dbReference>
<dbReference type="HOGENOM" id="CLU_169643_1_1_6"/>
<dbReference type="OrthoDB" id="47476at2"/>
<dbReference type="GO" id="GO:0022625">
    <property type="term" value="C:cytosolic large ribosomal subunit"/>
    <property type="evidence" value="ECO:0007669"/>
    <property type="project" value="TreeGrafter"/>
</dbReference>
<dbReference type="GO" id="GO:0003735">
    <property type="term" value="F:structural constituent of ribosome"/>
    <property type="evidence" value="ECO:0007669"/>
    <property type="project" value="InterPro"/>
</dbReference>
<dbReference type="GO" id="GO:0006412">
    <property type="term" value="P:translation"/>
    <property type="evidence" value="ECO:0007669"/>
    <property type="project" value="UniProtKB-UniRule"/>
</dbReference>
<dbReference type="FunFam" id="4.10.410.60:FF:000001">
    <property type="entry name" value="50S ribosomal protein L35"/>
    <property type="match status" value="1"/>
</dbReference>
<dbReference type="Gene3D" id="4.10.410.60">
    <property type="match status" value="1"/>
</dbReference>
<dbReference type="HAMAP" id="MF_00514">
    <property type="entry name" value="Ribosomal_bL35"/>
    <property type="match status" value="1"/>
</dbReference>
<dbReference type="InterPro" id="IPR001706">
    <property type="entry name" value="Ribosomal_bL35"/>
</dbReference>
<dbReference type="InterPro" id="IPR021137">
    <property type="entry name" value="Ribosomal_bL35-like"/>
</dbReference>
<dbReference type="InterPro" id="IPR018265">
    <property type="entry name" value="Ribosomal_bL35_CS"/>
</dbReference>
<dbReference type="InterPro" id="IPR037229">
    <property type="entry name" value="Ribosomal_bL35_sf"/>
</dbReference>
<dbReference type="NCBIfam" id="TIGR00001">
    <property type="entry name" value="rpmI_bact"/>
    <property type="match status" value="1"/>
</dbReference>
<dbReference type="PANTHER" id="PTHR33343">
    <property type="entry name" value="54S RIBOSOMAL PROTEIN BL35M"/>
    <property type="match status" value="1"/>
</dbReference>
<dbReference type="PANTHER" id="PTHR33343:SF1">
    <property type="entry name" value="LARGE RIBOSOMAL SUBUNIT PROTEIN BL35M"/>
    <property type="match status" value="1"/>
</dbReference>
<dbReference type="Pfam" id="PF01632">
    <property type="entry name" value="Ribosomal_L35p"/>
    <property type="match status" value="1"/>
</dbReference>
<dbReference type="PRINTS" id="PR00064">
    <property type="entry name" value="RIBOSOMALL35"/>
</dbReference>
<dbReference type="SUPFAM" id="SSF143034">
    <property type="entry name" value="L35p-like"/>
    <property type="match status" value="1"/>
</dbReference>
<dbReference type="PROSITE" id="PS00936">
    <property type="entry name" value="RIBOSOMAL_L35"/>
    <property type="match status" value="1"/>
</dbReference>
<evidence type="ECO:0000255" key="1">
    <source>
        <dbReference type="HAMAP-Rule" id="MF_00514"/>
    </source>
</evidence>
<evidence type="ECO:0000256" key="2">
    <source>
        <dbReference type="SAM" id="MobiDB-lite"/>
    </source>
</evidence>
<evidence type="ECO:0000305" key="3"/>
<comment type="similarity">
    <text evidence="1">Belongs to the bacterial ribosomal protein bL35 family.</text>
</comment>
<organism>
    <name type="scientific">Serratia proteamaculans (strain 568)</name>
    <dbReference type="NCBI Taxonomy" id="399741"/>
    <lineage>
        <taxon>Bacteria</taxon>
        <taxon>Pseudomonadati</taxon>
        <taxon>Pseudomonadota</taxon>
        <taxon>Gammaproteobacteria</taxon>
        <taxon>Enterobacterales</taxon>
        <taxon>Yersiniaceae</taxon>
        <taxon>Serratia</taxon>
    </lineage>
</organism>
<accession>A8GDQ7</accession>
<feature type="chain" id="PRO_1000060894" description="Large ribosomal subunit protein bL35">
    <location>
        <begin position="1"/>
        <end position="65"/>
    </location>
</feature>
<feature type="region of interest" description="Disordered" evidence="2">
    <location>
        <begin position="1"/>
        <end position="22"/>
    </location>
</feature>
<feature type="compositionally biased region" description="Basic residues" evidence="2">
    <location>
        <begin position="10"/>
        <end position="22"/>
    </location>
</feature>
<name>RL35_SERP5</name>
<gene>
    <name evidence="1" type="primary">rpmI</name>
    <name type="ordered locus">Spro_2146</name>
</gene>
<sequence length="65" mass="7356">MPKIKTVRGAAKRFKKTGSGGFKRKHANLRHILTKKATKRKRHLRPKGMVSKNDMVLVVACLPYA</sequence>
<keyword id="KW-0687">Ribonucleoprotein</keyword>
<keyword id="KW-0689">Ribosomal protein</keyword>
<reference key="1">
    <citation type="submission" date="2007-09" db="EMBL/GenBank/DDBJ databases">
        <title>Complete sequence of chromosome of Serratia proteamaculans 568.</title>
        <authorList>
            <consortium name="US DOE Joint Genome Institute"/>
            <person name="Copeland A."/>
            <person name="Lucas S."/>
            <person name="Lapidus A."/>
            <person name="Barry K."/>
            <person name="Glavina del Rio T."/>
            <person name="Dalin E."/>
            <person name="Tice H."/>
            <person name="Pitluck S."/>
            <person name="Chain P."/>
            <person name="Malfatti S."/>
            <person name="Shin M."/>
            <person name="Vergez L."/>
            <person name="Schmutz J."/>
            <person name="Larimer F."/>
            <person name="Land M."/>
            <person name="Hauser L."/>
            <person name="Kyrpides N."/>
            <person name="Kim E."/>
            <person name="Taghavi S."/>
            <person name="Newman L."/>
            <person name="Vangronsveld J."/>
            <person name="van der Lelie D."/>
            <person name="Richardson P."/>
        </authorList>
    </citation>
    <scope>NUCLEOTIDE SEQUENCE [LARGE SCALE GENOMIC DNA]</scope>
    <source>
        <strain>568</strain>
    </source>
</reference>
<protein>
    <recommendedName>
        <fullName evidence="1">Large ribosomal subunit protein bL35</fullName>
    </recommendedName>
    <alternativeName>
        <fullName evidence="3">50S ribosomal protein L35</fullName>
    </alternativeName>
</protein>
<proteinExistence type="inferred from homology"/>